<keyword id="KW-0067">ATP-binding</keyword>
<keyword id="KW-0997">Cell inner membrane</keyword>
<keyword id="KW-1003">Cell membrane</keyword>
<keyword id="KW-0201">Cytochrome c-type biogenesis</keyword>
<keyword id="KW-0472">Membrane</keyword>
<keyword id="KW-0547">Nucleotide-binding</keyword>
<keyword id="KW-1185">Reference proteome</keyword>
<keyword id="KW-1278">Translocase</keyword>
<keyword id="KW-0813">Transport</keyword>
<protein>
    <recommendedName>
        <fullName evidence="1">Cytochrome c biogenesis ATP-binding export protein CcmA</fullName>
        <ecNumber evidence="1">7.6.2.5</ecNumber>
    </recommendedName>
    <alternativeName>
        <fullName evidence="1">Heme exporter protein A</fullName>
    </alternativeName>
</protein>
<organism>
    <name type="scientific">Rhodopseudomonas palustris (strain HaA2)</name>
    <dbReference type="NCBI Taxonomy" id="316058"/>
    <lineage>
        <taxon>Bacteria</taxon>
        <taxon>Pseudomonadati</taxon>
        <taxon>Pseudomonadota</taxon>
        <taxon>Alphaproteobacteria</taxon>
        <taxon>Hyphomicrobiales</taxon>
        <taxon>Nitrobacteraceae</taxon>
        <taxon>Rhodopseudomonas</taxon>
    </lineage>
</organism>
<comment type="function">
    <text evidence="1">Part of the ABC transporter complex CcmAB involved in the biogenesis of c-type cytochromes; once thought to export heme, this seems not to be the case, but its exact role is uncertain. Responsible for energy coupling to the transport system.</text>
</comment>
<comment type="catalytic activity">
    <reaction evidence="1">
        <text>heme b(in) + ATP + H2O = heme b(out) + ADP + phosphate + H(+)</text>
        <dbReference type="Rhea" id="RHEA:19261"/>
        <dbReference type="ChEBI" id="CHEBI:15377"/>
        <dbReference type="ChEBI" id="CHEBI:15378"/>
        <dbReference type="ChEBI" id="CHEBI:30616"/>
        <dbReference type="ChEBI" id="CHEBI:43474"/>
        <dbReference type="ChEBI" id="CHEBI:60344"/>
        <dbReference type="ChEBI" id="CHEBI:456216"/>
        <dbReference type="EC" id="7.6.2.5"/>
    </reaction>
</comment>
<comment type="subunit">
    <text evidence="1">The complex is composed of two ATP-binding proteins (CcmA) and two transmembrane proteins (CcmB).</text>
</comment>
<comment type="subcellular location">
    <subcellularLocation>
        <location evidence="1">Cell inner membrane</location>
        <topology evidence="1">Peripheral membrane protein</topology>
    </subcellularLocation>
</comment>
<comment type="similarity">
    <text evidence="1">Belongs to the ABC transporter superfamily. CcmA exporter (TC 3.A.1.107) family.</text>
</comment>
<evidence type="ECO:0000255" key="1">
    <source>
        <dbReference type="HAMAP-Rule" id="MF_01707"/>
    </source>
</evidence>
<proteinExistence type="inferred from homology"/>
<sequence>MRLSGRGLRCVRGGREVFDGLDFEAAGGEALALIGRNGAGKTSLLRLIAGLLMPAAGSIDFDGSEPDTPVAEQAHYLGHRDALKPSLSVVENLAFWRDFLGGEPTDLMAGITAVGLSHAAELPAAYLSAGQRRRLSIARLLVVRRPIWLLDEPTSALDVRGQAMFARLMSDHLASGGLIVAATHSPLGITTREMRIGAAA</sequence>
<feature type="chain" id="PRO_0000271951" description="Cytochrome c biogenesis ATP-binding export protein CcmA">
    <location>
        <begin position="1"/>
        <end position="200"/>
    </location>
</feature>
<feature type="domain" description="ABC transporter" evidence="1">
    <location>
        <begin position="1"/>
        <end position="200"/>
    </location>
</feature>
<feature type="binding site" evidence="1">
    <location>
        <begin position="35"/>
        <end position="42"/>
    </location>
    <ligand>
        <name>ATP</name>
        <dbReference type="ChEBI" id="CHEBI:30616"/>
    </ligand>
</feature>
<accession>Q2J3F7</accession>
<gene>
    <name evidence="1" type="primary">ccmA</name>
    <name type="ordered locus">RPB_0292</name>
</gene>
<dbReference type="EC" id="7.6.2.5" evidence="1"/>
<dbReference type="EMBL" id="CP000250">
    <property type="protein sequence ID" value="ABD05003.1"/>
    <property type="molecule type" value="Genomic_DNA"/>
</dbReference>
<dbReference type="RefSeq" id="WP_011439193.1">
    <property type="nucleotide sequence ID" value="NC_007778.1"/>
</dbReference>
<dbReference type="SMR" id="Q2J3F7"/>
<dbReference type="STRING" id="316058.RPB_0292"/>
<dbReference type="KEGG" id="rpb:RPB_0292"/>
<dbReference type="eggNOG" id="COG4133">
    <property type="taxonomic scope" value="Bacteria"/>
</dbReference>
<dbReference type="HOGENOM" id="CLU_000604_1_2_5"/>
<dbReference type="OrthoDB" id="9800654at2"/>
<dbReference type="Proteomes" id="UP000008809">
    <property type="component" value="Chromosome"/>
</dbReference>
<dbReference type="GO" id="GO:0005886">
    <property type="term" value="C:plasma membrane"/>
    <property type="evidence" value="ECO:0007669"/>
    <property type="project" value="UniProtKB-SubCell"/>
</dbReference>
<dbReference type="GO" id="GO:0015439">
    <property type="term" value="F:ABC-type heme transporter activity"/>
    <property type="evidence" value="ECO:0007669"/>
    <property type="project" value="UniProtKB-EC"/>
</dbReference>
<dbReference type="GO" id="GO:0005524">
    <property type="term" value="F:ATP binding"/>
    <property type="evidence" value="ECO:0007669"/>
    <property type="project" value="UniProtKB-KW"/>
</dbReference>
<dbReference type="GO" id="GO:0016887">
    <property type="term" value="F:ATP hydrolysis activity"/>
    <property type="evidence" value="ECO:0007669"/>
    <property type="project" value="InterPro"/>
</dbReference>
<dbReference type="GO" id="GO:0017004">
    <property type="term" value="P:cytochrome complex assembly"/>
    <property type="evidence" value="ECO:0007669"/>
    <property type="project" value="UniProtKB-KW"/>
</dbReference>
<dbReference type="Gene3D" id="3.40.50.300">
    <property type="entry name" value="P-loop containing nucleotide triphosphate hydrolases"/>
    <property type="match status" value="1"/>
</dbReference>
<dbReference type="InterPro" id="IPR003593">
    <property type="entry name" value="AAA+_ATPase"/>
</dbReference>
<dbReference type="InterPro" id="IPR003439">
    <property type="entry name" value="ABC_transporter-like_ATP-bd"/>
</dbReference>
<dbReference type="InterPro" id="IPR017871">
    <property type="entry name" value="ABC_transporter-like_CS"/>
</dbReference>
<dbReference type="InterPro" id="IPR005895">
    <property type="entry name" value="ABC_transptr_haem_export_CcmA"/>
</dbReference>
<dbReference type="InterPro" id="IPR027417">
    <property type="entry name" value="P-loop_NTPase"/>
</dbReference>
<dbReference type="NCBIfam" id="TIGR01189">
    <property type="entry name" value="ccmA"/>
    <property type="match status" value="1"/>
</dbReference>
<dbReference type="PANTHER" id="PTHR43499">
    <property type="entry name" value="ABC TRANSPORTER I FAMILY MEMBER 1"/>
    <property type="match status" value="1"/>
</dbReference>
<dbReference type="PANTHER" id="PTHR43499:SF1">
    <property type="entry name" value="ABC TRANSPORTER I FAMILY MEMBER 1"/>
    <property type="match status" value="1"/>
</dbReference>
<dbReference type="Pfam" id="PF00005">
    <property type="entry name" value="ABC_tran"/>
    <property type="match status" value="1"/>
</dbReference>
<dbReference type="SMART" id="SM00382">
    <property type="entry name" value="AAA"/>
    <property type="match status" value="1"/>
</dbReference>
<dbReference type="SUPFAM" id="SSF52540">
    <property type="entry name" value="P-loop containing nucleoside triphosphate hydrolases"/>
    <property type="match status" value="1"/>
</dbReference>
<dbReference type="PROSITE" id="PS00211">
    <property type="entry name" value="ABC_TRANSPORTER_1"/>
    <property type="match status" value="1"/>
</dbReference>
<dbReference type="PROSITE" id="PS50893">
    <property type="entry name" value="ABC_TRANSPORTER_2"/>
    <property type="match status" value="1"/>
</dbReference>
<dbReference type="PROSITE" id="PS51243">
    <property type="entry name" value="CCMA"/>
    <property type="match status" value="1"/>
</dbReference>
<reference key="1">
    <citation type="submission" date="2006-01" db="EMBL/GenBank/DDBJ databases">
        <title>Complete sequence of Rhodopseudomonas palustris HaA2.</title>
        <authorList>
            <consortium name="US DOE Joint Genome Institute"/>
            <person name="Copeland A."/>
            <person name="Lucas S."/>
            <person name="Lapidus A."/>
            <person name="Barry K."/>
            <person name="Detter J.C."/>
            <person name="Glavina T."/>
            <person name="Hammon N."/>
            <person name="Israni S."/>
            <person name="Pitluck S."/>
            <person name="Chain P."/>
            <person name="Malfatti S."/>
            <person name="Shin M."/>
            <person name="Vergez L."/>
            <person name="Schmutz J."/>
            <person name="Larimer F."/>
            <person name="Land M."/>
            <person name="Hauser L."/>
            <person name="Pelletier D.A."/>
            <person name="Kyrpides N."/>
            <person name="Anderson I."/>
            <person name="Oda Y."/>
            <person name="Harwood C.S."/>
            <person name="Richardson P."/>
        </authorList>
    </citation>
    <scope>NUCLEOTIDE SEQUENCE [LARGE SCALE GENOMIC DNA]</scope>
    <source>
        <strain>HaA2</strain>
    </source>
</reference>
<name>CCMA_RHOP2</name>